<sequence>MSDDNSHSSDTVNSKKGFFSLLLSQLFHGEPKNRDELLALIRDSGQNELIDEDTRDMLEGVMDIADQRVRDIMIPRSQMITLKRNQTLDECLDVIIESAHSRFPVISEDKDHIEGILMAKDLLPFMRSDAEAFSMDKVLRTAVVVPESKRVDRMLKEFRSQRYHMAIVIDEFGGVSGLVTIEDILELIVGEIEDEYDEEDDIDFRQLSRHTWTIRALASIEDFNDAFGTHFSDEEVDTIGGLVMQAFGHLPARGETIDIDGYQFKVAMADSRRIIQVHVRIPDDSPQPKLDE</sequence>
<comment type="function">
    <text evidence="1">Plays a role in the transport of magnesium and cobalt ions.</text>
</comment>
<comment type="similarity">
    <text evidence="3">Belongs to the UPF0053 family.</text>
</comment>
<reference key="1">
    <citation type="journal article" date="2001" name="Nature">
        <title>Complete genome sequence of a multiple drug resistant Salmonella enterica serovar Typhi CT18.</title>
        <authorList>
            <person name="Parkhill J."/>
            <person name="Dougan G."/>
            <person name="James K.D."/>
            <person name="Thomson N.R."/>
            <person name="Pickard D."/>
            <person name="Wain J."/>
            <person name="Churcher C.M."/>
            <person name="Mungall K.L."/>
            <person name="Bentley S.D."/>
            <person name="Holden M.T.G."/>
            <person name="Sebaihia M."/>
            <person name="Baker S."/>
            <person name="Basham D."/>
            <person name="Brooks K."/>
            <person name="Chillingworth T."/>
            <person name="Connerton P."/>
            <person name="Cronin A."/>
            <person name="Davis P."/>
            <person name="Davies R.M."/>
            <person name="Dowd L."/>
            <person name="White N."/>
            <person name="Farrar J."/>
            <person name="Feltwell T."/>
            <person name="Hamlin N."/>
            <person name="Haque A."/>
            <person name="Hien T.T."/>
            <person name="Holroyd S."/>
            <person name="Jagels K."/>
            <person name="Krogh A."/>
            <person name="Larsen T.S."/>
            <person name="Leather S."/>
            <person name="Moule S."/>
            <person name="O'Gaora P."/>
            <person name="Parry C."/>
            <person name="Quail M.A."/>
            <person name="Rutherford K.M."/>
            <person name="Simmonds M."/>
            <person name="Skelton J."/>
            <person name="Stevens K."/>
            <person name="Whitehead S."/>
            <person name="Barrell B.G."/>
        </authorList>
    </citation>
    <scope>NUCLEOTIDE SEQUENCE [LARGE SCALE GENOMIC DNA]</scope>
    <source>
        <strain>CT18</strain>
    </source>
</reference>
<reference key="2">
    <citation type="journal article" date="2003" name="J. Bacteriol.">
        <title>Comparative genomics of Salmonella enterica serovar Typhi strains Ty2 and CT18.</title>
        <authorList>
            <person name="Deng W."/>
            <person name="Liou S.-R."/>
            <person name="Plunkett G. III"/>
            <person name="Mayhew G.F."/>
            <person name="Rose D.J."/>
            <person name="Burland V."/>
            <person name="Kodoyianni V."/>
            <person name="Schwartz D.C."/>
            <person name="Blattner F.R."/>
        </authorList>
    </citation>
    <scope>NUCLEOTIDE SEQUENCE [LARGE SCALE GENOMIC DNA]</scope>
    <source>
        <strain>ATCC 700931 / Ty2</strain>
    </source>
</reference>
<organism>
    <name type="scientific">Salmonella typhi</name>
    <dbReference type="NCBI Taxonomy" id="90370"/>
    <lineage>
        <taxon>Bacteria</taxon>
        <taxon>Pseudomonadati</taxon>
        <taxon>Pseudomonadota</taxon>
        <taxon>Gammaproteobacteria</taxon>
        <taxon>Enterobacterales</taxon>
        <taxon>Enterobacteriaceae</taxon>
        <taxon>Salmonella</taxon>
    </lineage>
</organism>
<protein>
    <recommendedName>
        <fullName>Magnesium and cobalt efflux protein CorC</fullName>
    </recommendedName>
</protein>
<feature type="chain" id="PRO_0000088350" description="Magnesium and cobalt efflux protein CorC">
    <location>
        <begin position="1"/>
        <end position="292"/>
    </location>
</feature>
<feature type="domain" description="CBS 1" evidence="2">
    <location>
        <begin position="73"/>
        <end position="133"/>
    </location>
</feature>
<feature type="domain" description="CBS 2" evidence="2">
    <location>
        <begin position="135"/>
        <end position="195"/>
    </location>
</feature>
<evidence type="ECO:0000250" key="1"/>
<evidence type="ECO:0000255" key="2">
    <source>
        <dbReference type="PROSITE-ProRule" id="PRU00703"/>
    </source>
</evidence>
<evidence type="ECO:0000305" key="3"/>
<gene>
    <name type="primary">corC</name>
    <name type="ordered locus">STY0712</name>
    <name type="ordered locus">t2206</name>
</gene>
<name>CORC_SALTI</name>
<keyword id="KW-0129">CBS domain</keyword>
<keyword id="KW-0170">Cobalt</keyword>
<keyword id="KW-0460">Magnesium</keyword>
<keyword id="KW-0677">Repeat</keyword>
<keyword id="KW-0813">Transport</keyword>
<dbReference type="EMBL" id="AL513382">
    <property type="protein sequence ID" value="CAD05138.1"/>
    <property type="molecule type" value="Genomic_DNA"/>
</dbReference>
<dbReference type="EMBL" id="AE014613">
    <property type="protein sequence ID" value="AAO69810.1"/>
    <property type="molecule type" value="Genomic_DNA"/>
</dbReference>
<dbReference type="RefSeq" id="NP_455236.1">
    <property type="nucleotide sequence ID" value="NC_003198.1"/>
</dbReference>
<dbReference type="RefSeq" id="WP_001278615.1">
    <property type="nucleotide sequence ID" value="NZ_WSUR01000015.1"/>
</dbReference>
<dbReference type="SMR" id="P0A2L4"/>
<dbReference type="STRING" id="220341.gene:17584719"/>
<dbReference type="KEGG" id="stt:t2206"/>
<dbReference type="KEGG" id="sty:STY0712"/>
<dbReference type="PATRIC" id="fig|220341.7.peg.717"/>
<dbReference type="eggNOG" id="COG4535">
    <property type="taxonomic scope" value="Bacteria"/>
</dbReference>
<dbReference type="HOGENOM" id="CLU_015237_3_0_6"/>
<dbReference type="OMA" id="QMISIKA"/>
<dbReference type="OrthoDB" id="9797674at2"/>
<dbReference type="Proteomes" id="UP000000541">
    <property type="component" value="Chromosome"/>
</dbReference>
<dbReference type="Proteomes" id="UP000002670">
    <property type="component" value="Chromosome"/>
</dbReference>
<dbReference type="GO" id="GO:0005886">
    <property type="term" value="C:plasma membrane"/>
    <property type="evidence" value="ECO:0007669"/>
    <property type="project" value="TreeGrafter"/>
</dbReference>
<dbReference type="GO" id="GO:0050660">
    <property type="term" value="F:flavin adenine dinucleotide binding"/>
    <property type="evidence" value="ECO:0007669"/>
    <property type="project" value="InterPro"/>
</dbReference>
<dbReference type="CDD" id="cd04590">
    <property type="entry name" value="CBS_pair_CorC_HlyC_assoc"/>
    <property type="match status" value="1"/>
</dbReference>
<dbReference type="FunFam" id="3.30.465.10:FF:000003">
    <property type="entry name" value="Magnesium and cobalt efflux protein corC"/>
    <property type="match status" value="1"/>
</dbReference>
<dbReference type="FunFam" id="3.10.580.10:FF:000002">
    <property type="entry name" value="Magnesium/cobalt efflux protein CorC"/>
    <property type="match status" value="1"/>
</dbReference>
<dbReference type="Gene3D" id="3.30.465.10">
    <property type="match status" value="1"/>
</dbReference>
<dbReference type="Gene3D" id="3.10.580.10">
    <property type="entry name" value="CBS-domain"/>
    <property type="match status" value="1"/>
</dbReference>
<dbReference type="InterPro" id="IPR000644">
    <property type="entry name" value="CBS_dom"/>
</dbReference>
<dbReference type="InterPro" id="IPR046342">
    <property type="entry name" value="CBS_dom_sf"/>
</dbReference>
<dbReference type="InterPro" id="IPR054115">
    <property type="entry name" value="CorC_N"/>
</dbReference>
<dbReference type="InterPro" id="IPR036318">
    <property type="entry name" value="FAD-bd_PCMH-like_sf"/>
</dbReference>
<dbReference type="InterPro" id="IPR016169">
    <property type="entry name" value="FAD-bd_PCMH_sub2"/>
</dbReference>
<dbReference type="InterPro" id="IPR044751">
    <property type="entry name" value="Ion_transp-like_CBS"/>
</dbReference>
<dbReference type="InterPro" id="IPR005170">
    <property type="entry name" value="Transptr-assoc_dom"/>
</dbReference>
<dbReference type="NCBIfam" id="NF011675">
    <property type="entry name" value="PRK15094.1"/>
    <property type="match status" value="1"/>
</dbReference>
<dbReference type="PANTHER" id="PTHR22777">
    <property type="entry name" value="HEMOLYSIN-RELATED"/>
    <property type="match status" value="1"/>
</dbReference>
<dbReference type="PANTHER" id="PTHR22777:SF27">
    <property type="entry name" value="MAGNESIUM AND COBALT EFFLUX PROTEIN CORC"/>
    <property type="match status" value="1"/>
</dbReference>
<dbReference type="Pfam" id="PF00571">
    <property type="entry name" value="CBS"/>
    <property type="match status" value="2"/>
</dbReference>
<dbReference type="Pfam" id="PF03471">
    <property type="entry name" value="CorC_HlyC"/>
    <property type="match status" value="1"/>
</dbReference>
<dbReference type="Pfam" id="PF21917">
    <property type="entry name" value="NMB0537_N"/>
    <property type="match status" value="1"/>
</dbReference>
<dbReference type="SMART" id="SM00116">
    <property type="entry name" value="CBS"/>
    <property type="match status" value="2"/>
</dbReference>
<dbReference type="SMART" id="SM01091">
    <property type="entry name" value="CorC_HlyC"/>
    <property type="match status" value="1"/>
</dbReference>
<dbReference type="SUPFAM" id="SSF54631">
    <property type="entry name" value="CBS-domain pair"/>
    <property type="match status" value="1"/>
</dbReference>
<dbReference type="SUPFAM" id="SSF56176">
    <property type="entry name" value="FAD-binding/transporter-associated domain-like"/>
    <property type="match status" value="1"/>
</dbReference>
<dbReference type="PROSITE" id="PS51371">
    <property type="entry name" value="CBS"/>
    <property type="match status" value="2"/>
</dbReference>
<accession>P0A2L4</accession>
<accession>O87575</accession>
<accession>Q9R874</accession>
<proteinExistence type="inferred from homology"/>